<reference key="1">
    <citation type="journal article" date="2006" name="PLoS Genet.">
        <title>Who ate whom? Adaptive Helicobacter genomic changes that accompanied a host jump from early humans to large felines.</title>
        <authorList>
            <person name="Eppinger M."/>
            <person name="Baar C."/>
            <person name="Linz B."/>
            <person name="Raddatz G."/>
            <person name="Lanz C."/>
            <person name="Keller H."/>
            <person name="Morelli G."/>
            <person name="Gressmann H."/>
            <person name="Achtman M."/>
            <person name="Schuster S.C."/>
        </authorList>
    </citation>
    <scope>NUCLEOTIDE SEQUENCE [LARGE SCALE GENOMIC DNA]</scope>
    <source>
        <strain>Sheeba</strain>
    </source>
</reference>
<name>RDXA_HELAH</name>
<accession>Q17X32</accession>
<protein>
    <recommendedName>
        <fullName>Oxygen-insensitive NADPH nitroreductase</fullName>
        <ecNumber>1.-.-.-</ecNumber>
    </recommendedName>
</protein>
<proteinExistence type="inferred from homology"/>
<comment type="function">
    <text evidence="1">Reduction of a variety of nitroaromatic compounds using NADPH as source of reducing equivalents; two electrons are transferred.</text>
</comment>
<comment type="similarity">
    <text evidence="2">Belongs to the nitroreductase family.</text>
</comment>
<sequence>MKFLNQEKRKQLLNERHSCKMFDKHYTFSSEELEEIAEIARLSPSSYNTQPWHFVMVTNKDLKNQIAAHSYFNKDMIESASALVVVCSLKPVELLPNGHYMQNLYDEPYRSRTLLSFAQMLDLRFNHSMQKLESYILEQCYIAVGQICLGVSLMGLDSCIIGGFDALKVGEVLSQRINDPKIACLIALGKRVKEASQKSRKPKNHAITWL</sequence>
<keyword id="KW-0521">NADP</keyword>
<keyword id="KW-0560">Oxidoreductase</keyword>
<dbReference type="EC" id="1.-.-.-"/>
<dbReference type="EMBL" id="AM260522">
    <property type="protein sequence ID" value="CAJ99794.1"/>
    <property type="molecule type" value="Genomic_DNA"/>
</dbReference>
<dbReference type="RefSeq" id="WP_011577904.1">
    <property type="nucleotide sequence ID" value="NC_008229.1"/>
</dbReference>
<dbReference type="SMR" id="Q17X32"/>
<dbReference type="STRING" id="382638.Hac_1030"/>
<dbReference type="GeneID" id="31758403"/>
<dbReference type="KEGG" id="hac:Hac_1030"/>
<dbReference type="eggNOG" id="COG0778">
    <property type="taxonomic scope" value="Bacteria"/>
</dbReference>
<dbReference type="HOGENOM" id="CLU_070764_10_0_7"/>
<dbReference type="OrthoDB" id="9809288at2"/>
<dbReference type="BioCyc" id="HACI382638:HAC_RS04415-MONOMER"/>
<dbReference type="Proteomes" id="UP000000775">
    <property type="component" value="Chromosome"/>
</dbReference>
<dbReference type="GO" id="GO:0016491">
    <property type="term" value="F:oxidoreductase activity"/>
    <property type="evidence" value="ECO:0007669"/>
    <property type="project" value="UniProtKB-KW"/>
</dbReference>
<dbReference type="CDD" id="cd02149">
    <property type="entry name" value="NfsB-like"/>
    <property type="match status" value="1"/>
</dbReference>
<dbReference type="Gene3D" id="3.40.109.10">
    <property type="entry name" value="NADH Oxidase"/>
    <property type="match status" value="1"/>
</dbReference>
<dbReference type="InterPro" id="IPR033878">
    <property type="entry name" value="NfsB-like"/>
</dbReference>
<dbReference type="InterPro" id="IPR029479">
    <property type="entry name" value="Nitroreductase"/>
</dbReference>
<dbReference type="InterPro" id="IPR000415">
    <property type="entry name" value="Nitroreductase-like"/>
</dbReference>
<dbReference type="PANTHER" id="PTHR43673">
    <property type="entry name" value="NAD(P)H NITROREDUCTASE YDGI-RELATED"/>
    <property type="match status" value="1"/>
</dbReference>
<dbReference type="PANTHER" id="PTHR43673:SF10">
    <property type="entry name" value="NADH DEHYDROGENASE_NAD(P)H NITROREDUCTASE XCC3605-RELATED"/>
    <property type="match status" value="1"/>
</dbReference>
<dbReference type="Pfam" id="PF00881">
    <property type="entry name" value="Nitroreductase"/>
    <property type="match status" value="1"/>
</dbReference>
<dbReference type="SUPFAM" id="SSF55469">
    <property type="entry name" value="FMN-dependent nitroreductase-like"/>
    <property type="match status" value="1"/>
</dbReference>
<evidence type="ECO:0000250" key="1"/>
<evidence type="ECO:0000305" key="2"/>
<feature type="chain" id="PRO_0000321865" description="Oxygen-insensitive NADPH nitroreductase">
    <location>
        <begin position="1"/>
        <end position="210"/>
    </location>
</feature>
<feature type="binding site" evidence="1">
    <location>
        <begin position="150"/>
        <end position="155"/>
    </location>
    <ligand>
        <name>NADP(+)</name>
        <dbReference type="ChEBI" id="CHEBI:58349"/>
    </ligand>
</feature>
<organism>
    <name type="scientific">Helicobacter acinonychis (strain Sheeba)</name>
    <dbReference type="NCBI Taxonomy" id="382638"/>
    <lineage>
        <taxon>Bacteria</taxon>
        <taxon>Pseudomonadati</taxon>
        <taxon>Campylobacterota</taxon>
        <taxon>Epsilonproteobacteria</taxon>
        <taxon>Campylobacterales</taxon>
        <taxon>Helicobacteraceae</taxon>
        <taxon>Helicobacter</taxon>
    </lineage>
</organism>
<gene>
    <name type="primary">rdxA</name>
    <name type="ordered locus">Hac_1030</name>
</gene>